<reference key="1">
    <citation type="journal article" date="1993" name="Nucleic Acids Res.">
        <title>Cloning and analysis of the S2 ribosomal protein cDNA from Drosophila.</title>
        <authorList>
            <person name="Barrio R."/>
            <person name="del Arco A."/>
            <person name="Cabrera H.L."/>
            <person name="Arribas C."/>
        </authorList>
    </citation>
    <scope>NUCLEOTIDE SEQUENCE [GENOMIC DNA / MRNA]</scope>
    <source>
        <strain>Canton-S</strain>
    </source>
</reference>
<reference key="2">
    <citation type="journal article" date="1994" name="Genetics">
        <title>String of pearls encodes Drosophila ribosomal protein S2, has Minute-like characteristics, and is required during oogenesis.</title>
        <authorList>
            <person name="Cramton S.E."/>
            <person name="Laski F.A."/>
        </authorList>
    </citation>
    <scope>NUCLEOTIDE SEQUENCE [MRNA]</scope>
    <scope>FUNCTION</scope>
</reference>
<reference key="3">
    <citation type="journal article" date="2000" name="Science">
        <title>The genome sequence of Drosophila melanogaster.</title>
        <authorList>
            <person name="Adams M.D."/>
            <person name="Celniker S.E."/>
            <person name="Holt R.A."/>
            <person name="Evans C.A."/>
            <person name="Gocayne J.D."/>
            <person name="Amanatides P.G."/>
            <person name="Scherer S.E."/>
            <person name="Li P.W."/>
            <person name="Hoskins R.A."/>
            <person name="Galle R.F."/>
            <person name="George R.A."/>
            <person name="Lewis S.E."/>
            <person name="Richards S."/>
            <person name="Ashburner M."/>
            <person name="Henderson S.N."/>
            <person name="Sutton G.G."/>
            <person name="Wortman J.R."/>
            <person name="Yandell M.D."/>
            <person name="Zhang Q."/>
            <person name="Chen L.X."/>
            <person name="Brandon R.C."/>
            <person name="Rogers Y.-H.C."/>
            <person name="Blazej R.G."/>
            <person name="Champe M."/>
            <person name="Pfeiffer B.D."/>
            <person name="Wan K.H."/>
            <person name="Doyle C."/>
            <person name="Baxter E.G."/>
            <person name="Helt G."/>
            <person name="Nelson C.R."/>
            <person name="Miklos G.L.G."/>
            <person name="Abril J.F."/>
            <person name="Agbayani A."/>
            <person name="An H.-J."/>
            <person name="Andrews-Pfannkoch C."/>
            <person name="Baldwin D."/>
            <person name="Ballew R.M."/>
            <person name="Basu A."/>
            <person name="Baxendale J."/>
            <person name="Bayraktaroglu L."/>
            <person name="Beasley E.M."/>
            <person name="Beeson K.Y."/>
            <person name="Benos P.V."/>
            <person name="Berman B.P."/>
            <person name="Bhandari D."/>
            <person name="Bolshakov S."/>
            <person name="Borkova D."/>
            <person name="Botchan M.R."/>
            <person name="Bouck J."/>
            <person name="Brokstein P."/>
            <person name="Brottier P."/>
            <person name="Burtis K.C."/>
            <person name="Busam D.A."/>
            <person name="Butler H."/>
            <person name="Cadieu E."/>
            <person name="Center A."/>
            <person name="Chandra I."/>
            <person name="Cherry J.M."/>
            <person name="Cawley S."/>
            <person name="Dahlke C."/>
            <person name="Davenport L.B."/>
            <person name="Davies P."/>
            <person name="de Pablos B."/>
            <person name="Delcher A."/>
            <person name="Deng Z."/>
            <person name="Mays A.D."/>
            <person name="Dew I."/>
            <person name="Dietz S.M."/>
            <person name="Dodson K."/>
            <person name="Doup L.E."/>
            <person name="Downes M."/>
            <person name="Dugan-Rocha S."/>
            <person name="Dunkov B.C."/>
            <person name="Dunn P."/>
            <person name="Durbin K.J."/>
            <person name="Evangelista C.C."/>
            <person name="Ferraz C."/>
            <person name="Ferriera S."/>
            <person name="Fleischmann W."/>
            <person name="Fosler C."/>
            <person name="Gabrielian A.E."/>
            <person name="Garg N.S."/>
            <person name="Gelbart W.M."/>
            <person name="Glasser K."/>
            <person name="Glodek A."/>
            <person name="Gong F."/>
            <person name="Gorrell J.H."/>
            <person name="Gu Z."/>
            <person name="Guan P."/>
            <person name="Harris M."/>
            <person name="Harris N.L."/>
            <person name="Harvey D.A."/>
            <person name="Heiman T.J."/>
            <person name="Hernandez J.R."/>
            <person name="Houck J."/>
            <person name="Hostin D."/>
            <person name="Houston K.A."/>
            <person name="Howland T.J."/>
            <person name="Wei M.-H."/>
            <person name="Ibegwam C."/>
            <person name="Jalali M."/>
            <person name="Kalush F."/>
            <person name="Karpen G.H."/>
            <person name="Ke Z."/>
            <person name="Kennison J.A."/>
            <person name="Ketchum K.A."/>
            <person name="Kimmel B.E."/>
            <person name="Kodira C.D."/>
            <person name="Kraft C.L."/>
            <person name="Kravitz S."/>
            <person name="Kulp D."/>
            <person name="Lai Z."/>
            <person name="Lasko P."/>
            <person name="Lei Y."/>
            <person name="Levitsky A.A."/>
            <person name="Li J.H."/>
            <person name="Li Z."/>
            <person name="Liang Y."/>
            <person name="Lin X."/>
            <person name="Liu X."/>
            <person name="Mattei B."/>
            <person name="McIntosh T.C."/>
            <person name="McLeod M.P."/>
            <person name="McPherson D."/>
            <person name="Merkulov G."/>
            <person name="Milshina N.V."/>
            <person name="Mobarry C."/>
            <person name="Morris J."/>
            <person name="Moshrefi A."/>
            <person name="Mount S.M."/>
            <person name="Moy M."/>
            <person name="Murphy B."/>
            <person name="Murphy L."/>
            <person name="Muzny D.M."/>
            <person name="Nelson D.L."/>
            <person name="Nelson D.R."/>
            <person name="Nelson K.A."/>
            <person name="Nixon K."/>
            <person name="Nusskern D.R."/>
            <person name="Pacleb J.M."/>
            <person name="Palazzolo M."/>
            <person name="Pittman G.S."/>
            <person name="Pan S."/>
            <person name="Pollard J."/>
            <person name="Puri V."/>
            <person name="Reese M.G."/>
            <person name="Reinert K."/>
            <person name="Remington K."/>
            <person name="Saunders R.D.C."/>
            <person name="Scheeler F."/>
            <person name="Shen H."/>
            <person name="Shue B.C."/>
            <person name="Siden-Kiamos I."/>
            <person name="Simpson M."/>
            <person name="Skupski M.P."/>
            <person name="Smith T.J."/>
            <person name="Spier E."/>
            <person name="Spradling A.C."/>
            <person name="Stapleton M."/>
            <person name="Strong R."/>
            <person name="Sun E."/>
            <person name="Svirskas R."/>
            <person name="Tector C."/>
            <person name="Turner R."/>
            <person name="Venter E."/>
            <person name="Wang A.H."/>
            <person name="Wang X."/>
            <person name="Wang Z.-Y."/>
            <person name="Wassarman D.A."/>
            <person name="Weinstock G.M."/>
            <person name="Weissenbach J."/>
            <person name="Williams S.M."/>
            <person name="Woodage T."/>
            <person name="Worley K.C."/>
            <person name="Wu D."/>
            <person name="Yang S."/>
            <person name="Yao Q.A."/>
            <person name="Ye J."/>
            <person name="Yeh R.-F."/>
            <person name="Zaveri J.S."/>
            <person name="Zhan M."/>
            <person name="Zhang G."/>
            <person name="Zhao Q."/>
            <person name="Zheng L."/>
            <person name="Zheng X.H."/>
            <person name="Zhong F.N."/>
            <person name="Zhong W."/>
            <person name="Zhou X."/>
            <person name="Zhu S.C."/>
            <person name="Zhu X."/>
            <person name="Smith H.O."/>
            <person name="Gibbs R.A."/>
            <person name="Myers E.W."/>
            <person name="Rubin G.M."/>
            <person name="Venter J.C."/>
        </authorList>
    </citation>
    <scope>NUCLEOTIDE SEQUENCE [LARGE SCALE GENOMIC DNA]</scope>
    <source>
        <strain>Berkeley</strain>
    </source>
</reference>
<reference key="4">
    <citation type="journal article" date="2002" name="Genome Biol.">
        <title>Annotation of the Drosophila melanogaster euchromatic genome: a systematic review.</title>
        <authorList>
            <person name="Misra S."/>
            <person name="Crosby M.A."/>
            <person name="Mungall C.J."/>
            <person name="Matthews B.B."/>
            <person name="Campbell K.S."/>
            <person name="Hradecky P."/>
            <person name="Huang Y."/>
            <person name="Kaminker J.S."/>
            <person name="Millburn G.H."/>
            <person name="Prochnik S.E."/>
            <person name="Smith C.D."/>
            <person name="Tupy J.L."/>
            <person name="Whitfield E.J."/>
            <person name="Bayraktaroglu L."/>
            <person name="Berman B.P."/>
            <person name="Bettencourt B.R."/>
            <person name="Celniker S.E."/>
            <person name="de Grey A.D.N.J."/>
            <person name="Drysdale R.A."/>
            <person name="Harris N.L."/>
            <person name="Richter J."/>
            <person name="Russo S."/>
            <person name="Schroeder A.J."/>
            <person name="Shu S.Q."/>
            <person name="Stapleton M."/>
            <person name="Yamada C."/>
            <person name="Ashburner M."/>
            <person name="Gelbart W.M."/>
            <person name="Rubin G.M."/>
            <person name="Lewis S.E."/>
        </authorList>
    </citation>
    <scope>GENOME REANNOTATION</scope>
    <source>
        <strain>Berkeley</strain>
    </source>
</reference>
<reference key="5">
    <citation type="journal article" date="2002" name="Genome Biol.">
        <title>A Drosophila full-length cDNA resource.</title>
        <authorList>
            <person name="Stapleton M."/>
            <person name="Carlson J.W."/>
            <person name="Brokstein P."/>
            <person name="Yu C."/>
            <person name="Champe M."/>
            <person name="George R.A."/>
            <person name="Guarin H."/>
            <person name="Kronmiller B."/>
            <person name="Pacleb J.M."/>
            <person name="Park S."/>
            <person name="Wan K.H."/>
            <person name="Rubin G.M."/>
            <person name="Celniker S.E."/>
        </authorList>
    </citation>
    <scope>NUCLEOTIDE SEQUENCE [LARGE SCALE MRNA]</scope>
    <source>
        <strain>Berkeley</strain>
        <tissue>Embryo</tissue>
    </source>
</reference>
<reference key="6">
    <citation type="journal article" date="2008" name="J. Proteome Res.">
        <title>Phosphoproteome analysis of Drosophila melanogaster embryos.</title>
        <authorList>
            <person name="Zhai B."/>
            <person name="Villen J."/>
            <person name="Beausoleil S.A."/>
            <person name="Mintseris J."/>
            <person name="Gygi S.P."/>
        </authorList>
    </citation>
    <scope>PHOSPHORYLATION [LARGE SCALE ANALYSIS] AT SER-60</scope>
    <scope>IDENTIFICATION BY MASS SPECTROMETRY</scope>
    <source>
        <tissue>Embryo</tissue>
    </source>
</reference>
<reference key="7">
    <citation type="journal article" date="2013" name="Nature">
        <title>Structures of the human and Drosophila 80S ribosome.</title>
        <authorList>
            <person name="Anger A.M."/>
            <person name="Armache J.P."/>
            <person name="Berninghausen O."/>
            <person name="Habeck M."/>
            <person name="Subklewe M."/>
            <person name="Wilson D.N."/>
            <person name="Beckmann R."/>
        </authorList>
    </citation>
    <scope>STRUCTURE BY ELECTRON MICROSCOPY (6.0 ANGSTROMS) OF THE 80S RIBOSOME</scope>
</reference>
<name>RS2_DROME</name>
<organism>
    <name type="scientific">Drosophila melanogaster</name>
    <name type="common">Fruit fly</name>
    <dbReference type="NCBI Taxonomy" id="7227"/>
    <lineage>
        <taxon>Eukaryota</taxon>
        <taxon>Metazoa</taxon>
        <taxon>Ecdysozoa</taxon>
        <taxon>Arthropoda</taxon>
        <taxon>Hexapoda</taxon>
        <taxon>Insecta</taxon>
        <taxon>Pterygota</taxon>
        <taxon>Neoptera</taxon>
        <taxon>Endopterygota</taxon>
        <taxon>Diptera</taxon>
        <taxon>Brachycera</taxon>
        <taxon>Muscomorpha</taxon>
        <taxon>Ephydroidea</taxon>
        <taxon>Drosophilidae</taxon>
        <taxon>Drosophila</taxon>
        <taxon>Sophophora</taxon>
    </lineage>
</organism>
<comment type="function">
    <text evidence="1 5">Component of the ribosome, a large ribonucleoprotein complex responsible for the synthesis of proteins in the cell. The small ribosomal subunit (SSU) binds messenger RNAs (mRNAs) and translates the encoded message by selecting cognate aminoacyl-transfer RNA (tRNA) molecules. The large subunit (LSU) contains the ribosomal catalytic site termed the peptidyl transferase center (PTC), which catalyzes the formation of peptide bonds, thereby polymerizing the amino acids delivered by tRNAs into a polypeptide chain. The nascent polypeptides leave the ribosome through a tunnel in the LSU and interact with protein factors that function in enzymatic processing, targeting, and the membrane insertion of nascent chains at the exit of the ribosomal tunnel. Plays a role in the assembly and function of the 40S ribosomal subunit. Mutations in this protein affects the control of translational fidelity. Involved in nucleolar processing of pre-18S ribosomal RNA and ribosome assembly (By similarity). Has a specific developmental role during oogenesis (PubMed:7982558).</text>
</comment>
<comment type="similarity">
    <text evidence="6">Belongs to the universal ribosomal protein uS5 family.</text>
</comment>
<sequence length="267" mass="28900">MADEAPARSGFRGGFGSRGGRGGRGRGRGRWARGRGKEDSKEWVPVTKLGRLVREGKIKSLEEIYLYSLPIKEFEIIDFFLGSSLKDEVLKIMPVQKQTRAGQRTRFKAFVAIGDNNGHIGLGVKCSKEVATAIRGAIILAKLSVVPVRRGYWGNKIGKPHTVPCKVTGKCGSVSVRLIPAPRGTGIVSAPVPKKLLTMAGIEDCYTSARGSTGTLGNFAKATYAAIAKTYAYLTPDLWKEMPLGSTPYQAYSDFLSKPTPRLHADA</sequence>
<feature type="chain" id="PRO_0000131679" description="Small ribosomal subunit protein uS5">
    <location>
        <begin position="1"/>
        <end position="267"/>
    </location>
</feature>
<feature type="domain" description="S5 DRBM" evidence="2">
    <location>
        <begin position="85"/>
        <end position="148"/>
    </location>
</feature>
<feature type="region of interest" description="Disordered" evidence="3">
    <location>
        <begin position="1"/>
        <end position="37"/>
    </location>
</feature>
<feature type="compositionally biased region" description="Gly residues" evidence="3">
    <location>
        <begin position="11"/>
        <end position="20"/>
    </location>
</feature>
<feature type="compositionally biased region" description="Basic residues" evidence="3">
    <location>
        <begin position="21"/>
        <end position="34"/>
    </location>
</feature>
<feature type="modified residue" description="Phosphoserine" evidence="4">
    <location>
        <position position="60"/>
    </location>
</feature>
<feature type="sequence conflict" description="In Ref. 1; CAA48872." evidence="6" ref="1">
    <original>GG</original>
    <variation>PP</variation>
    <location>
        <begin position="19"/>
        <end position="20"/>
    </location>
</feature>
<feature type="sequence conflict" description="In Ref. 1; CAA48872." evidence="6" ref="1">
    <original>K</original>
    <variation>R</variation>
    <location>
        <position position="194"/>
    </location>
</feature>
<protein>
    <recommendedName>
        <fullName evidence="6">Small ribosomal subunit protein uS5</fullName>
    </recommendedName>
    <alternativeName>
        <fullName>40S ribosomal protein S2</fullName>
    </alternativeName>
    <alternativeName>
        <fullName>Protein strings of pearls</fullName>
    </alternativeName>
</protein>
<gene>
    <name type="primary">RpS2</name>
    <name type="synonym">sop</name>
    <name type="ORF">CG5920</name>
</gene>
<dbReference type="EMBL" id="U01334">
    <property type="protein sequence ID" value="AAC34198.1"/>
    <property type="molecule type" value="mRNA"/>
</dbReference>
<dbReference type="EMBL" id="U01335">
    <property type="protein sequence ID" value="AAA87053.1"/>
    <property type="molecule type" value="Genomic_DNA"/>
</dbReference>
<dbReference type="EMBL" id="X69120">
    <property type="protein sequence ID" value="CAA48872.1"/>
    <property type="molecule type" value="mRNA"/>
</dbReference>
<dbReference type="EMBL" id="AE014134">
    <property type="protein sequence ID" value="AAF52822.1"/>
    <property type="molecule type" value="Genomic_DNA"/>
</dbReference>
<dbReference type="EMBL" id="AY094799">
    <property type="protein sequence ID" value="AAM11152.1"/>
    <property type="molecule type" value="mRNA"/>
</dbReference>
<dbReference type="PIR" id="S30395">
    <property type="entry name" value="S30395"/>
</dbReference>
<dbReference type="RefSeq" id="NP_001260303.1">
    <property type="nucleotide sequence ID" value="NM_001273374.2"/>
</dbReference>
<dbReference type="RefSeq" id="NP_001285785.1">
    <property type="nucleotide sequence ID" value="NM_001298856.1"/>
</dbReference>
<dbReference type="RefSeq" id="NP_476874.1">
    <property type="nucleotide sequence ID" value="NM_057526.5"/>
</dbReference>
<dbReference type="PDB" id="4V6W">
    <property type="method" value="EM"/>
    <property type="resolution" value="6.00 A"/>
    <property type="chains" value="AC=1-267"/>
</dbReference>
<dbReference type="PDB" id="6XU6">
    <property type="method" value="EM"/>
    <property type="resolution" value="3.50 A"/>
    <property type="chains" value="AC=38-264"/>
</dbReference>
<dbReference type="PDB" id="6XU7">
    <property type="method" value="EM"/>
    <property type="resolution" value="4.90 A"/>
    <property type="chains" value="AC=38-264"/>
</dbReference>
<dbReference type="PDB" id="6XU8">
    <property type="method" value="EM"/>
    <property type="resolution" value="3.00 A"/>
    <property type="chains" value="AC=38-264"/>
</dbReference>
<dbReference type="PDBsum" id="4V6W"/>
<dbReference type="PDBsum" id="6XU6"/>
<dbReference type="PDBsum" id="6XU7"/>
<dbReference type="PDBsum" id="6XU8"/>
<dbReference type="EMDB" id="EMD-10622"/>
<dbReference type="EMDB" id="EMD-10623"/>
<dbReference type="EMDB" id="EMD-10624"/>
<dbReference type="SMR" id="P31009"/>
<dbReference type="BioGRID" id="60403">
    <property type="interactions" value="118"/>
</dbReference>
<dbReference type="DIP" id="DIP-18767N"/>
<dbReference type="FunCoup" id="P31009">
    <property type="interactions" value="1563"/>
</dbReference>
<dbReference type="IntAct" id="P31009">
    <property type="interactions" value="9"/>
</dbReference>
<dbReference type="MINT" id="P31009"/>
<dbReference type="STRING" id="7227.FBpp0303531"/>
<dbReference type="iPTMnet" id="P31009"/>
<dbReference type="PaxDb" id="7227-FBpp0079500"/>
<dbReference type="EnsemblMetazoa" id="FBtr0079905">
    <property type="protein sequence ID" value="FBpp0079500"/>
    <property type="gene ID" value="FBgn0004867"/>
</dbReference>
<dbReference type="EnsemblMetazoa" id="FBtr0330682">
    <property type="protein sequence ID" value="FBpp0303531"/>
    <property type="gene ID" value="FBgn0004867"/>
</dbReference>
<dbReference type="EnsemblMetazoa" id="FBtr0345436">
    <property type="protein sequence ID" value="FBpp0311561"/>
    <property type="gene ID" value="FBgn0004867"/>
</dbReference>
<dbReference type="GeneID" id="34309"/>
<dbReference type="KEGG" id="dme:Dmel_CG5920"/>
<dbReference type="AGR" id="FB:FBgn0004867"/>
<dbReference type="CTD" id="6187"/>
<dbReference type="FlyBase" id="FBgn0004867">
    <property type="gene designation" value="RpS2"/>
</dbReference>
<dbReference type="VEuPathDB" id="VectorBase:FBgn0004867"/>
<dbReference type="eggNOG" id="KOG0877">
    <property type="taxonomic scope" value="Eukaryota"/>
</dbReference>
<dbReference type="GeneTree" id="ENSGT00940000153095"/>
<dbReference type="HOGENOM" id="CLU_065898_0_2_1"/>
<dbReference type="InParanoid" id="P31009"/>
<dbReference type="OMA" id="CYTSANG"/>
<dbReference type="OrthoDB" id="10253125at2759"/>
<dbReference type="PhylomeDB" id="P31009"/>
<dbReference type="Reactome" id="R-DME-156827">
    <property type="pathway name" value="L13a-mediated translational silencing of Ceruloplasmin expression"/>
</dbReference>
<dbReference type="Reactome" id="R-DME-1799339">
    <property type="pathway name" value="SRP-dependent cotranslational protein targeting to membrane"/>
</dbReference>
<dbReference type="Reactome" id="R-DME-3214858">
    <property type="pathway name" value="RMTs methylate histone arginines"/>
</dbReference>
<dbReference type="Reactome" id="R-DME-6791226">
    <property type="pathway name" value="Major pathway of rRNA processing in the nucleolus and cytosol"/>
</dbReference>
<dbReference type="Reactome" id="R-DME-72649">
    <property type="pathway name" value="Translation initiation complex formation"/>
</dbReference>
<dbReference type="Reactome" id="R-DME-72689">
    <property type="pathway name" value="Formation of a pool of free 40S subunits"/>
</dbReference>
<dbReference type="Reactome" id="R-DME-72695">
    <property type="pathway name" value="Formation of the ternary complex, and subsequently, the 43S complex"/>
</dbReference>
<dbReference type="Reactome" id="R-DME-72702">
    <property type="pathway name" value="Ribosomal scanning and start codon recognition"/>
</dbReference>
<dbReference type="Reactome" id="R-DME-72706">
    <property type="pathway name" value="GTP hydrolysis and joining of the 60S ribosomal subunit"/>
</dbReference>
<dbReference type="Reactome" id="R-DME-8876725">
    <property type="pathway name" value="Protein methylation"/>
</dbReference>
<dbReference type="Reactome" id="R-DME-975956">
    <property type="pathway name" value="Nonsense Mediated Decay (NMD) independent of the Exon Junction Complex (EJC)"/>
</dbReference>
<dbReference type="Reactome" id="R-DME-975957">
    <property type="pathway name" value="Nonsense Mediated Decay (NMD) enhanced by the Exon Junction Complex (EJC)"/>
</dbReference>
<dbReference type="SignaLink" id="P31009"/>
<dbReference type="BioGRID-ORCS" id="34309">
    <property type="hits" value="1 hit in 1 CRISPR screen"/>
</dbReference>
<dbReference type="ChiTaRS" id="RpS2">
    <property type="organism name" value="fly"/>
</dbReference>
<dbReference type="GenomeRNAi" id="34309"/>
<dbReference type="PRO" id="PR:P31009"/>
<dbReference type="Proteomes" id="UP000000803">
    <property type="component" value="Chromosome 2L"/>
</dbReference>
<dbReference type="Bgee" id="FBgn0004867">
    <property type="expression patterns" value="Expressed in secondary oocyte and 293 other cell types or tissues"/>
</dbReference>
<dbReference type="ExpressionAtlas" id="P31009">
    <property type="expression patterns" value="baseline and differential"/>
</dbReference>
<dbReference type="GO" id="GO:0005737">
    <property type="term" value="C:cytoplasm"/>
    <property type="evidence" value="ECO:0000314"/>
    <property type="project" value="FlyBase"/>
</dbReference>
<dbReference type="GO" id="GO:0022626">
    <property type="term" value="C:cytosolic ribosome"/>
    <property type="evidence" value="ECO:0000314"/>
    <property type="project" value="FlyBase"/>
</dbReference>
<dbReference type="GO" id="GO:0022627">
    <property type="term" value="C:cytosolic small ribosomal subunit"/>
    <property type="evidence" value="ECO:0000318"/>
    <property type="project" value="GO_Central"/>
</dbReference>
<dbReference type="GO" id="GO:0005730">
    <property type="term" value="C:nucleolus"/>
    <property type="evidence" value="ECO:0000314"/>
    <property type="project" value="FlyBase"/>
</dbReference>
<dbReference type="GO" id="GO:0003723">
    <property type="term" value="F:RNA binding"/>
    <property type="evidence" value="ECO:0007669"/>
    <property type="project" value="InterPro"/>
</dbReference>
<dbReference type="GO" id="GO:0003735">
    <property type="term" value="F:structural constituent of ribosome"/>
    <property type="evidence" value="ECO:0000314"/>
    <property type="project" value="FlyBase"/>
</dbReference>
<dbReference type="GO" id="GO:0002181">
    <property type="term" value="P:cytoplasmic translation"/>
    <property type="evidence" value="ECO:0000304"/>
    <property type="project" value="FlyBase"/>
</dbReference>
<dbReference type="GO" id="GO:0048477">
    <property type="term" value="P:oogenesis"/>
    <property type="evidence" value="ECO:0007669"/>
    <property type="project" value="UniProtKB-KW"/>
</dbReference>
<dbReference type="GO" id="GO:0006412">
    <property type="term" value="P:translation"/>
    <property type="evidence" value="ECO:0000318"/>
    <property type="project" value="GO_Central"/>
</dbReference>
<dbReference type="FunFam" id="3.30.160.20:FF:000133">
    <property type="entry name" value="40S ribosomal protein S2"/>
    <property type="match status" value="1"/>
</dbReference>
<dbReference type="FunFam" id="3.30.230.10:FF:000004">
    <property type="entry name" value="40S ribosomal protein S2"/>
    <property type="match status" value="1"/>
</dbReference>
<dbReference type="Gene3D" id="3.30.160.20">
    <property type="match status" value="1"/>
</dbReference>
<dbReference type="Gene3D" id="3.30.230.10">
    <property type="match status" value="1"/>
</dbReference>
<dbReference type="InterPro" id="IPR020568">
    <property type="entry name" value="Ribosomal_Su5_D2-typ_SF"/>
</dbReference>
<dbReference type="InterPro" id="IPR000851">
    <property type="entry name" value="Ribosomal_uS5"/>
</dbReference>
<dbReference type="InterPro" id="IPR005324">
    <property type="entry name" value="Ribosomal_uS5_C"/>
</dbReference>
<dbReference type="InterPro" id="IPR005711">
    <property type="entry name" value="Ribosomal_uS5_euk/arc"/>
</dbReference>
<dbReference type="InterPro" id="IPR013810">
    <property type="entry name" value="Ribosomal_uS5_N"/>
</dbReference>
<dbReference type="InterPro" id="IPR018192">
    <property type="entry name" value="Ribosomal_uS5_N_CS"/>
</dbReference>
<dbReference type="InterPro" id="IPR014721">
    <property type="entry name" value="Ribsml_uS5_D2-typ_fold_subgr"/>
</dbReference>
<dbReference type="NCBIfam" id="TIGR01020">
    <property type="entry name" value="uS5_euk_arch"/>
    <property type="match status" value="1"/>
</dbReference>
<dbReference type="PANTHER" id="PTHR13718:SF4">
    <property type="entry name" value="40S RIBOSOMAL PROTEIN S2"/>
    <property type="match status" value="1"/>
</dbReference>
<dbReference type="PANTHER" id="PTHR13718">
    <property type="entry name" value="RIBOSOMAL S SUBUNIT"/>
    <property type="match status" value="1"/>
</dbReference>
<dbReference type="Pfam" id="PF00333">
    <property type="entry name" value="Ribosomal_S5"/>
    <property type="match status" value="1"/>
</dbReference>
<dbReference type="Pfam" id="PF03719">
    <property type="entry name" value="Ribosomal_S5_C"/>
    <property type="match status" value="1"/>
</dbReference>
<dbReference type="SUPFAM" id="SSF54768">
    <property type="entry name" value="dsRNA-binding domain-like"/>
    <property type="match status" value="1"/>
</dbReference>
<dbReference type="SUPFAM" id="SSF54211">
    <property type="entry name" value="Ribosomal protein S5 domain 2-like"/>
    <property type="match status" value="1"/>
</dbReference>
<dbReference type="PROSITE" id="PS00585">
    <property type="entry name" value="RIBOSOMAL_S5"/>
    <property type="match status" value="1"/>
</dbReference>
<dbReference type="PROSITE" id="PS50881">
    <property type="entry name" value="S5_DSRBD"/>
    <property type="match status" value="1"/>
</dbReference>
<accession>P31009</accession>
<accession>Q9VL74</accession>
<keyword id="KW-0002">3D-structure</keyword>
<keyword id="KW-0217">Developmental protein</keyword>
<keyword id="KW-0221">Differentiation</keyword>
<keyword id="KW-0896">Oogenesis</keyword>
<keyword id="KW-0597">Phosphoprotein</keyword>
<keyword id="KW-1185">Reference proteome</keyword>
<keyword id="KW-0687">Ribonucleoprotein</keyword>
<keyword id="KW-0689">Ribosomal protein</keyword>
<proteinExistence type="evidence at protein level"/>
<evidence type="ECO:0000250" key="1">
    <source>
        <dbReference type="UniProtKB" id="P25443"/>
    </source>
</evidence>
<evidence type="ECO:0000255" key="2">
    <source>
        <dbReference type="PROSITE-ProRule" id="PRU00268"/>
    </source>
</evidence>
<evidence type="ECO:0000256" key="3">
    <source>
        <dbReference type="SAM" id="MobiDB-lite"/>
    </source>
</evidence>
<evidence type="ECO:0000269" key="4">
    <source>
    </source>
</evidence>
<evidence type="ECO:0000269" key="5">
    <source>
    </source>
</evidence>
<evidence type="ECO:0000305" key="6"/>